<proteinExistence type="inferred from homology"/>
<protein>
    <recommendedName>
        <fullName evidence="1">Elongation factor 4</fullName>
        <shortName evidence="1">EF-4</shortName>
        <ecNumber evidence="1">3.6.5.n1</ecNumber>
    </recommendedName>
    <alternativeName>
        <fullName evidence="1">Ribosomal back-translocase LepA</fullName>
    </alternativeName>
</protein>
<comment type="function">
    <text evidence="1">Required for accurate and efficient protein synthesis under certain stress conditions. May act as a fidelity factor of the translation reaction, by catalyzing a one-codon backward translocation of tRNAs on improperly translocated ribosomes. Back-translocation proceeds from a post-translocation (POST) complex to a pre-translocation (PRE) complex, thus giving elongation factor G a second chance to translocate the tRNAs correctly. Binds to ribosomes in a GTP-dependent manner.</text>
</comment>
<comment type="catalytic activity">
    <reaction evidence="1">
        <text>GTP + H2O = GDP + phosphate + H(+)</text>
        <dbReference type="Rhea" id="RHEA:19669"/>
        <dbReference type="ChEBI" id="CHEBI:15377"/>
        <dbReference type="ChEBI" id="CHEBI:15378"/>
        <dbReference type="ChEBI" id="CHEBI:37565"/>
        <dbReference type="ChEBI" id="CHEBI:43474"/>
        <dbReference type="ChEBI" id="CHEBI:58189"/>
        <dbReference type="EC" id="3.6.5.n1"/>
    </reaction>
</comment>
<comment type="subcellular location">
    <subcellularLocation>
        <location evidence="1">Cell inner membrane</location>
        <topology evidence="1">Peripheral membrane protein</topology>
        <orientation evidence="1">Cytoplasmic side</orientation>
    </subcellularLocation>
</comment>
<comment type="similarity">
    <text evidence="1">Belongs to the TRAFAC class translation factor GTPase superfamily. Classic translation factor GTPase family. LepA subfamily.</text>
</comment>
<gene>
    <name evidence="1" type="primary">lepA</name>
    <name type="ordered locus">YPTB2892</name>
</gene>
<accession>Q667U9</accession>
<feature type="chain" id="PRO_0000176382" description="Elongation factor 4">
    <location>
        <begin position="1"/>
        <end position="599"/>
    </location>
</feature>
<feature type="domain" description="tr-type G">
    <location>
        <begin position="2"/>
        <end position="184"/>
    </location>
</feature>
<feature type="binding site" evidence="1">
    <location>
        <begin position="14"/>
        <end position="19"/>
    </location>
    <ligand>
        <name>GTP</name>
        <dbReference type="ChEBI" id="CHEBI:37565"/>
    </ligand>
</feature>
<feature type="binding site" evidence="1">
    <location>
        <begin position="131"/>
        <end position="134"/>
    </location>
    <ligand>
        <name>GTP</name>
        <dbReference type="ChEBI" id="CHEBI:37565"/>
    </ligand>
</feature>
<name>LEPA_YERPS</name>
<evidence type="ECO:0000255" key="1">
    <source>
        <dbReference type="HAMAP-Rule" id="MF_00071"/>
    </source>
</evidence>
<sequence length="599" mass="66709">MKHIRNFSIIAHIDHGKSTLSDRIIQICGGLSEREMAAQVLDSMDLERERGITIKAQSVTLDYHSKDGQTYQLNFIDTPGHVDFSYEVSRSLAACEGALLVVDAGQGVEAQTLANCYTAMEMDLEVVPVLNKIDLPAADPERVAEEIEDIVGIDATDAIRCSAKTGVGVPDVLERLVRDIPAPEGDPNGPLQALIIDSWFDNYLGVVSLIRIKNGSLRKGDKVKVMSTGQSYNADRLGIFTPKRVDRDVLNCGEVGWLVCAIKDILGAPVGDTLTLTRNPAEKSLPGFKKVKPQVYAGLFPISSDDYESFRDALGKLSLNDASLFYEPESSTALGFGFRCGFLGLLHMEIIQERLEREYDLELITTAPTVVYEVITTNQETVYVDSPSKLPALNNIEELREPIAECHMLLPQEYLGNVITLCIEKRGTQTNMVYHGKQVALTYEIPMAEVVLDFFDRLKSTSRGYASLDYNFKRFQTSDMVRVDVLINNERVDALALITHRDNAQYRGRDLVEKMKELIPRQQFDIAIQAAIGNHIIARSTVKQLRKNVLAKCYGGDVSRKKKLLQKQKDGKKRMKQVGNVELPQEAFLAILHVGKDSK</sequence>
<keyword id="KW-0997">Cell inner membrane</keyword>
<keyword id="KW-1003">Cell membrane</keyword>
<keyword id="KW-0342">GTP-binding</keyword>
<keyword id="KW-0378">Hydrolase</keyword>
<keyword id="KW-0472">Membrane</keyword>
<keyword id="KW-0547">Nucleotide-binding</keyword>
<keyword id="KW-0648">Protein biosynthesis</keyword>
<dbReference type="EC" id="3.6.5.n1" evidence="1"/>
<dbReference type="EMBL" id="BX936398">
    <property type="protein sequence ID" value="CAH22130.1"/>
    <property type="molecule type" value="Genomic_DNA"/>
</dbReference>
<dbReference type="RefSeq" id="WP_002209677.1">
    <property type="nucleotide sequence ID" value="NZ_CP009712.1"/>
</dbReference>
<dbReference type="SMR" id="Q667U9"/>
<dbReference type="GeneID" id="57975975"/>
<dbReference type="KEGG" id="ypo:BZ17_3739"/>
<dbReference type="KEGG" id="yps:YPTB2892"/>
<dbReference type="PATRIC" id="fig|273123.14.peg.3921"/>
<dbReference type="Proteomes" id="UP000001011">
    <property type="component" value="Chromosome"/>
</dbReference>
<dbReference type="GO" id="GO:0005886">
    <property type="term" value="C:plasma membrane"/>
    <property type="evidence" value="ECO:0007669"/>
    <property type="project" value="UniProtKB-SubCell"/>
</dbReference>
<dbReference type="GO" id="GO:0005525">
    <property type="term" value="F:GTP binding"/>
    <property type="evidence" value="ECO:0007669"/>
    <property type="project" value="UniProtKB-UniRule"/>
</dbReference>
<dbReference type="GO" id="GO:0003924">
    <property type="term" value="F:GTPase activity"/>
    <property type="evidence" value="ECO:0007669"/>
    <property type="project" value="UniProtKB-UniRule"/>
</dbReference>
<dbReference type="GO" id="GO:0097216">
    <property type="term" value="F:guanosine tetraphosphate binding"/>
    <property type="evidence" value="ECO:0007669"/>
    <property type="project" value="UniProtKB-ARBA"/>
</dbReference>
<dbReference type="GO" id="GO:0043022">
    <property type="term" value="F:ribosome binding"/>
    <property type="evidence" value="ECO:0007669"/>
    <property type="project" value="UniProtKB-UniRule"/>
</dbReference>
<dbReference type="GO" id="GO:0003746">
    <property type="term" value="F:translation elongation factor activity"/>
    <property type="evidence" value="ECO:0007669"/>
    <property type="project" value="UniProtKB-UniRule"/>
</dbReference>
<dbReference type="GO" id="GO:0045727">
    <property type="term" value="P:positive regulation of translation"/>
    <property type="evidence" value="ECO:0007669"/>
    <property type="project" value="UniProtKB-UniRule"/>
</dbReference>
<dbReference type="CDD" id="cd03699">
    <property type="entry name" value="EF4_II"/>
    <property type="match status" value="1"/>
</dbReference>
<dbReference type="CDD" id="cd16260">
    <property type="entry name" value="EF4_III"/>
    <property type="match status" value="1"/>
</dbReference>
<dbReference type="CDD" id="cd01890">
    <property type="entry name" value="LepA"/>
    <property type="match status" value="1"/>
</dbReference>
<dbReference type="CDD" id="cd03709">
    <property type="entry name" value="lepA_C"/>
    <property type="match status" value="1"/>
</dbReference>
<dbReference type="FunFam" id="3.30.70.240:FF:000005">
    <property type="entry name" value="Elongation factor 4"/>
    <property type="match status" value="1"/>
</dbReference>
<dbReference type="FunFam" id="3.40.50.300:FF:000078">
    <property type="entry name" value="Elongation factor 4"/>
    <property type="match status" value="1"/>
</dbReference>
<dbReference type="FunFam" id="2.40.30.10:FF:000015">
    <property type="entry name" value="Translation factor GUF1, mitochondrial"/>
    <property type="match status" value="1"/>
</dbReference>
<dbReference type="FunFam" id="3.30.70.2570:FF:000001">
    <property type="entry name" value="Translation factor GUF1, mitochondrial"/>
    <property type="match status" value="1"/>
</dbReference>
<dbReference type="FunFam" id="3.30.70.870:FF:000004">
    <property type="entry name" value="Translation factor GUF1, mitochondrial"/>
    <property type="match status" value="1"/>
</dbReference>
<dbReference type="Gene3D" id="3.30.70.240">
    <property type="match status" value="1"/>
</dbReference>
<dbReference type="Gene3D" id="3.30.70.2570">
    <property type="entry name" value="Elongation factor 4, C-terminal domain"/>
    <property type="match status" value="1"/>
</dbReference>
<dbReference type="Gene3D" id="3.30.70.870">
    <property type="entry name" value="Elongation Factor G (Translational Gtpase), domain 3"/>
    <property type="match status" value="1"/>
</dbReference>
<dbReference type="Gene3D" id="3.40.50.300">
    <property type="entry name" value="P-loop containing nucleotide triphosphate hydrolases"/>
    <property type="match status" value="1"/>
</dbReference>
<dbReference type="Gene3D" id="2.40.30.10">
    <property type="entry name" value="Translation factors"/>
    <property type="match status" value="1"/>
</dbReference>
<dbReference type="HAMAP" id="MF_00071">
    <property type="entry name" value="LepA"/>
    <property type="match status" value="1"/>
</dbReference>
<dbReference type="InterPro" id="IPR006297">
    <property type="entry name" value="EF-4"/>
</dbReference>
<dbReference type="InterPro" id="IPR035647">
    <property type="entry name" value="EFG_III/V"/>
</dbReference>
<dbReference type="InterPro" id="IPR000640">
    <property type="entry name" value="EFG_V-like"/>
</dbReference>
<dbReference type="InterPro" id="IPR004161">
    <property type="entry name" value="EFTu-like_2"/>
</dbReference>
<dbReference type="InterPro" id="IPR031157">
    <property type="entry name" value="G_TR_CS"/>
</dbReference>
<dbReference type="InterPro" id="IPR038363">
    <property type="entry name" value="LepA_C_sf"/>
</dbReference>
<dbReference type="InterPro" id="IPR013842">
    <property type="entry name" value="LepA_CTD"/>
</dbReference>
<dbReference type="InterPro" id="IPR035654">
    <property type="entry name" value="LepA_IV"/>
</dbReference>
<dbReference type="InterPro" id="IPR027417">
    <property type="entry name" value="P-loop_NTPase"/>
</dbReference>
<dbReference type="InterPro" id="IPR005225">
    <property type="entry name" value="Small_GTP-bd"/>
</dbReference>
<dbReference type="InterPro" id="IPR000795">
    <property type="entry name" value="T_Tr_GTP-bd_dom"/>
</dbReference>
<dbReference type="NCBIfam" id="TIGR01393">
    <property type="entry name" value="lepA"/>
    <property type="match status" value="1"/>
</dbReference>
<dbReference type="NCBIfam" id="TIGR00231">
    <property type="entry name" value="small_GTP"/>
    <property type="match status" value="1"/>
</dbReference>
<dbReference type="PANTHER" id="PTHR43512:SF4">
    <property type="entry name" value="TRANSLATION FACTOR GUF1 HOMOLOG, CHLOROPLASTIC"/>
    <property type="match status" value="1"/>
</dbReference>
<dbReference type="PANTHER" id="PTHR43512">
    <property type="entry name" value="TRANSLATION FACTOR GUF1-RELATED"/>
    <property type="match status" value="1"/>
</dbReference>
<dbReference type="Pfam" id="PF00679">
    <property type="entry name" value="EFG_C"/>
    <property type="match status" value="1"/>
</dbReference>
<dbReference type="Pfam" id="PF00009">
    <property type="entry name" value="GTP_EFTU"/>
    <property type="match status" value="1"/>
</dbReference>
<dbReference type="Pfam" id="PF03144">
    <property type="entry name" value="GTP_EFTU_D2"/>
    <property type="match status" value="1"/>
</dbReference>
<dbReference type="Pfam" id="PF06421">
    <property type="entry name" value="LepA_C"/>
    <property type="match status" value="1"/>
</dbReference>
<dbReference type="PRINTS" id="PR00315">
    <property type="entry name" value="ELONGATNFCT"/>
</dbReference>
<dbReference type="SUPFAM" id="SSF54980">
    <property type="entry name" value="EF-G C-terminal domain-like"/>
    <property type="match status" value="2"/>
</dbReference>
<dbReference type="SUPFAM" id="SSF52540">
    <property type="entry name" value="P-loop containing nucleoside triphosphate hydrolases"/>
    <property type="match status" value="1"/>
</dbReference>
<dbReference type="PROSITE" id="PS00301">
    <property type="entry name" value="G_TR_1"/>
    <property type="match status" value="1"/>
</dbReference>
<dbReference type="PROSITE" id="PS51722">
    <property type="entry name" value="G_TR_2"/>
    <property type="match status" value="1"/>
</dbReference>
<reference key="1">
    <citation type="journal article" date="2004" name="Proc. Natl. Acad. Sci. U.S.A.">
        <title>Insights into the evolution of Yersinia pestis through whole-genome comparison with Yersinia pseudotuberculosis.</title>
        <authorList>
            <person name="Chain P.S.G."/>
            <person name="Carniel E."/>
            <person name="Larimer F.W."/>
            <person name="Lamerdin J."/>
            <person name="Stoutland P.O."/>
            <person name="Regala W.M."/>
            <person name="Georgescu A.M."/>
            <person name="Vergez L.M."/>
            <person name="Land M.L."/>
            <person name="Motin V.L."/>
            <person name="Brubaker R.R."/>
            <person name="Fowler J."/>
            <person name="Hinnebusch J."/>
            <person name="Marceau M."/>
            <person name="Medigue C."/>
            <person name="Simonet M."/>
            <person name="Chenal-Francisque V."/>
            <person name="Souza B."/>
            <person name="Dacheux D."/>
            <person name="Elliott J.M."/>
            <person name="Derbise A."/>
            <person name="Hauser L.J."/>
            <person name="Garcia E."/>
        </authorList>
    </citation>
    <scope>NUCLEOTIDE SEQUENCE [LARGE SCALE GENOMIC DNA]</scope>
    <source>
        <strain>IP32953</strain>
    </source>
</reference>
<organism>
    <name type="scientific">Yersinia pseudotuberculosis serotype I (strain IP32953)</name>
    <dbReference type="NCBI Taxonomy" id="273123"/>
    <lineage>
        <taxon>Bacteria</taxon>
        <taxon>Pseudomonadati</taxon>
        <taxon>Pseudomonadota</taxon>
        <taxon>Gammaproteobacteria</taxon>
        <taxon>Enterobacterales</taxon>
        <taxon>Yersiniaceae</taxon>
        <taxon>Yersinia</taxon>
    </lineage>
</organism>